<feature type="signal peptide" evidence="1">
    <location>
        <begin position="1"/>
        <end position="26"/>
    </location>
</feature>
<feature type="chain" id="PRO_0000271537" description="Extracellular matrix protein-binding protein emp">
    <location>
        <begin position="27"/>
        <end position="340"/>
    </location>
</feature>
<sequence>MKKKLLVLTMSTLFATQLINSNHAKASVTESVDKKFVVPESGINKIIPAYDEFKNSPKVNVSNLTDNKNFVVSEDKLNKIVDSSAASKIVDKNFAVPESKLGNIVPEYKEINNRVNVATNNPASQQVDKHFVAKGPEVNRFITQNKVNHHFITTQTHYKKVITSYKSTHVHKHVNHAKDSINKHFIVKPSESPRYTHPSQSLIIKHHFAVPGYHAHKFVTPGHASIKINHFCVVPQINSFKVIPPYGHNSHRMHVPSFQNNTTATHQNAKVNKAYDYKYFYSYKVVKGVKKYFSFSQSNGYKIGKPSLNIKNVNYQYAVPSYSPTHYVPEFKGSLPAPRV</sequence>
<proteinExistence type="inferred from homology"/>
<keyword id="KW-0732">Signal</keyword>
<comment type="function">
    <text evidence="1">Adhesin that binds to the host cell extracellular matrix proteins fibronectin, fibrinogen, collagen, and vitronectin.</text>
</comment>
<comment type="subcellular location">
    <subcellularLocation>
        <location evidence="1">Cell surface</location>
    </subcellularLocation>
</comment>
<accession>Q99VJ2</accession>
<dbReference type="EMBL" id="BA000017">
    <property type="protein sequence ID" value="BAB56975.1"/>
    <property type="molecule type" value="Genomic_DNA"/>
</dbReference>
<dbReference type="RefSeq" id="WP_000728068.1">
    <property type="nucleotide sequence ID" value="NC_002758.2"/>
</dbReference>
<dbReference type="KEGG" id="sav:SAV0813"/>
<dbReference type="HOGENOM" id="CLU_078520_0_0_9"/>
<dbReference type="Proteomes" id="UP000002481">
    <property type="component" value="Chromosome"/>
</dbReference>
<dbReference type="GO" id="GO:0009986">
    <property type="term" value="C:cell surface"/>
    <property type="evidence" value="ECO:0007669"/>
    <property type="project" value="UniProtKB-SubCell"/>
</dbReference>
<reference key="1">
    <citation type="journal article" date="2001" name="Lancet">
        <title>Whole genome sequencing of meticillin-resistant Staphylococcus aureus.</title>
        <authorList>
            <person name="Kuroda M."/>
            <person name="Ohta T."/>
            <person name="Uchiyama I."/>
            <person name="Baba T."/>
            <person name="Yuzawa H."/>
            <person name="Kobayashi I."/>
            <person name="Cui L."/>
            <person name="Oguchi A."/>
            <person name="Aoki K."/>
            <person name="Nagai Y."/>
            <person name="Lian J.-Q."/>
            <person name="Ito T."/>
            <person name="Kanamori M."/>
            <person name="Matsumaru H."/>
            <person name="Maruyama A."/>
            <person name="Murakami H."/>
            <person name="Hosoyama A."/>
            <person name="Mizutani-Ui Y."/>
            <person name="Takahashi N.K."/>
            <person name="Sawano T."/>
            <person name="Inoue R."/>
            <person name="Kaito C."/>
            <person name="Sekimizu K."/>
            <person name="Hirakawa H."/>
            <person name="Kuhara S."/>
            <person name="Goto S."/>
            <person name="Yabuzaki J."/>
            <person name="Kanehisa M."/>
            <person name="Yamashita A."/>
            <person name="Oshima K."/>
            <person name="Furuya K."/>
            <person name="Yoshino C."/>
            <person name="Shiba T."/>
            <person name="Hattori M."/>
            <person name="Ogasawara N."/>
            <person name="Hayashi H."/>
            <person name="Hiramatsu K."/>
        </authorList>
    </citation>
    <scope>NUCLEOTIDE SEQUENCE [LARGE SCALE GENOMIC DNA]</scope>
    <source>
        <strain>Mu50 / ATCC 700699</strain>
    </source>
</reference>
<organism>
    <name type="scientific">Staphylococcus aureus (strain Mu50 / ATCC 700699)</name>
    <dbReference type="NCBI Taxonomy" id="158878"/>
    <lineage>
        <taxon>Bacteria</taxon>
        <taxon>Bacillati</taxon>
        <taxon>Bacillota</taxon>
        <taxon>Bacilli</taxon>
        <taxon>Bacillales</taxon>
        <taxon>Staphylococcaceae</taxon>
        <taxon>Staphylococcus</taxon>
    </lineage>
</organism>
<name>EMP_STAAM</name>
<evidence type="ECO:0000250" key="1"/>
<protein>
    <recommendedName>
        <fullName>Extracellular matrix protein-binding protein emp</fullName>
    </recommendedName>
</protein>
<gene>
    <name type="primary">emp</name>
    <name type="ordered locus">SAV0813</name>
</gene>